<evidence type="ECO:0000255" key="1">
    <source>
        <dbReference type="HAMAP-Rule" id="MF_00072"/>
    </source>
</evidence>
<reference key="1">
    <citation type="journal article" date="2009" name="J. Bacteriol.">
        <title>Complete genome sequence and comparative genome analysis of enteropathogenic Escherichia coli O127:H6 strain E2348/69.</title>
        <authorList>
            <person name="Iguchi A."/>
            <person name="Thomson N.R."/>
            <person name="Ogura Y."/>
            <person name="Saunders D."/>
            <person name="Ooka T."/>
            <person name="Henderson I.R."/>
            <person name="Harris D."/>
            <person name="Asadulghani M."/>
            <person name="Kurokawa K."/>
            <person name="Dean P."/>
            <person name="Kenny B."/>
            <person name="Quail M.A."/>
            <person name="Thurston S."/>
            <person name="Dougan G."/>
            <person name="Hayashi T."/>
            <person name="Parkhill J."/>
            <person name="Frankel G."/>
        </authorList>
    </citation>
    <scope>NUCLEOTIDE SEQUENCE [LARGE SCALE GENOMIC DNA]</scope>
    <source>
        <strain>E2348/69 / EPEC</strain>
    </source>
</reference>
<feature type="chain" id="PRO_1000193524" description="Peptide chain release factor 3">
    <location>
        <begin position="1"/>
        <end position="529"/>
    </location>
</feature>
<feature type="domain" description="tr-type G">
    <location>
        <begin position="11"/>
        <end position="280"/>
    </location>
</feature>
<feature type="binding site" evidence="1">
    <location>
        <begin position="20"/>
        <end position="27"/>
    </location>
    <ligand>
        <name>GTP</name>
        <dbReference type="ChEBI" id="CHEBI:37565"/>
    </ligand>
</feature>
<feature type="binding site" evidence="1">
    <location>
        <begin position="88"/>
        <end position="92"/>
    </location>
    <ligand>
        <name>GTP</name>
        <dbReference type="ChEBI" id="CHEBI:37565"/>
    </ligand>
</feature>
<feature type="binding site" evidence="1">
    <location>
        <begin position="142"/>
        <end position="145"/>
    </location>
    <ligand>
        <name>GTP</name>
        <dbReference type="ChEBI" id="CHEBI:37565"/>
    </ligand>
</feature>
<organism>
    <name type="scientific">Escherichia coli O127:H6 (strain E2348/69 / EPEC)</name>
    <dbReference type="NCBI Taxonomy" id="574521"/>
    <lineage>
        <taxon>Bacteria</taxon>
        <taxon>Pseudomonadati</taxon>
        <taxon>Pseudomonadota</taxon>
        <taxon>Gammaproteobacteria</taxon>
        <taxon>Enterobacterales</taxon>
        <taxon>Enterobacteriaceae</taxon>
        <taxon>Escherichia</taxon>
    </lineage>
</organism>
<proteinExistence type="inferred from homology"/>
<name>RF3_ECO27</name>
<dbReference type="EMBL" id="FM180568">
    <property type="protein sequence ID" value="CAS12220.1"/>
    <property type="molecule type" value="Genomic_DNA"/>
</dbReference>
<dbReference type="RefSeq" id="WP_000175940.1">
    <property type="nucleotide sequence ID" value="NC_011601.1"/>
</dbReference>
<dbReference type="SMR" id="B7UR02"/>
<dbReference type="KEGG" id="ecg:E2348C_4672"/>
<dbReference type="HOGENOM" id="CLU_002794_2_1_6"/>
<dbReference type="Proteomes" id="UP000008205">
    <property type="component" value="Chromosome"/>
</dbReference>
<dbReference type="GO" id="GO:0005829">
    <property type="term" value="C:cytosol"/>
    <property type="evidence" value="ECO:0007669"/>
    <property type="project" value="TreeGrafter"/>
</dbReference>
<dbReference type="GO" id="GO:0005525">
    <property type="term" value="F:GTP binding"/>
    <property type="evidence" value="ECO:0007669"/>
    <property type="project" value="UniProtKB-UniRule"/>
</dbReference>
<dbReference type="GO" id="GO:0003924">
    <property type="term" value="F:GTPase activity"/>
    <property type="evidence" value="ECO:0007669"/>
    <property type="project" value="InterPro"/>
</dbReference>
<dbReference type="GO" id="GO:0097216">
    <property type="term" value="F:guanosine tetraphosphate binding"/>
    <property type="evidence" value="ECO:0007669"/>
    <property type="project" value="UniProtKB-ARBA"/>
</dbReference>
<dbReference type="GO" id="GO:0016150">
    <property type="term" value="F:translation release factor activity, codon nonspecific"/>
    <property type="evidence" value="ECO:0007669"/>
    <property type="project" value="TreeGrafter"/>
</dbReference>
<dbReference type="GO" id="GO:0016149">
    <property type="term" value="F:translation release factor activity, codon specific"/>
    <property type="evidence" value="ECO:0007669"/>
    <property type="project" value="UniProtKB-UniRule"/>
</dbReference>
<dbReference type="GO" id="GO:0006449">
    <property type="term" value="P:regulation of translational termination"/>
    <property type="evidence" value="ECO:0007669"/>
    <property type="project" value="UniProtKB-UniRule"/>
</dbReference>
<dbReference type="CDD" id="cd04169">
    <property type="entry name" value="RF3"/>
    <property type="match status" value="1"/>
</dbReference>
<dbReference type="CDD" id="cd03689">
    <property type="entry name" value="RF3_II"/>
    <property type="match status" value="1"/>
</dbReference>
<dbReference type="CDD" id="cd16259">
    <property type="entry name" value="RF3_III"/>
    <property type="match status" value="1"/>
</dbReference>
<dbReference type="FunFam" id="2.40.30.10:FF:000040">
    <property type="entry name" value="Peptide chain release factor 3"/>
    <property type="match status" value="1"/>
</dbReference>
<dbReference type="FunFam" id="3.30.70.3280:FF:000001">
    <property type="entry name" value="Peptide chain release factor 3"/>
    <property type="match status" value="1"/>
</dbReference>
<dbReference type="FunFam" id="3.40.50.300:FF:000184">
    <property type="entry name" value="Peptide chain release factor 3"/>
    <property type="match status" value="1"/>
</dbReference>
<dbReference type="FunFam" id="3.40.50.300:FF:000253">
    <property type="entry name" value="Peptide chain release factor 3"/>
    <property type="match status" value="1"/>
</dbReference>
<dbReference type="Gene3D" id="3.40.50.300">
    <property type="entry name" value="P-loop containing nucleotide triphosphate hydrolases"/>
    <property type="match status" value="3"/>
</dbReference>
<dbReference type="Gene3D" id="3.30.70.3280">
    <property type="entry name" value="Peptide chain release factor 3, domain III"/>
    <property type="match status" value="1"/>
</dbReference>
<dbReference type="HAMAP" id="MF_00072">
    <property type="entry name" value="Rel_fac_3"/>
    <property type="match status" value="1"/>
</dbReference>
<dbReference type="InterPro" id="IPR053905">
    <property type="entry name" value="EF-G-like_DII"/>
</dbReference>
<dbReference type="InterPro" id="IPR035647">
    <property type="entry name" value="EFG_III/V"/>
</dbReference>
<dbReference type="InterPro" id="IPR031157">
    <property type="entry name" value="G_TR_CS"/>
</dbReference>
<dbReference type="InterPro" id="IPR027417">
    <property type="entry name" value="P-loop_NTPase"/>
</dbReference>
<dbReference type="InterPro" id="IPR004548">
    <property type="entry name" value="PrfC"/>
</dbReference>
<dbReference type="InterPro" id="IPR032090">
    <property type="entry name" value="RF3_C"/>
</dbReference>
<dbReference type="InterPro" id="IPR038467">
    <property type="entry name" value="RF3_dom_3_sf"/>
</dbReference>
<dbReference type="InterPro" id="IPR041732">
    <property type="entry name" value="RF3_GTP-bd"/>
</dbReference>
<dbReference type="InterPro" id="IPR005225">
    <property type="entry name" value="Small_GTP-bd"/>
</dbReference>
<dbReference type="InterPro" id="IPR000795">
    <property type="entry name" value="T_Tr_GTP-bd_dom"/>
</dbReference>
<dbReference type="InterPro" id="IPR009000">
    <property type="entry name" value="Transl_B-barrel_sf"/>
</dbReference>
<dbReference type="NCBIfam" id="TIGR00503">
    <property type="entry name" value="prfC"/>
    <property type="match status" value="1"/>
</dbReference>
<dbReference type="NCBIfam" id="NF001964">
    <property type="entry name" value="PRK00741.1"/>
    <property type="match status" value="1"/>
</dbReference>
<dbReference type="NCBIfam" id="TIGR00231">
    <property type="entry name" value="small_GTP"/>
    <property type="match status" value="1"/>
</dbReference>
<dbReference type="PANTHER" id="PTHR43556">
    <property type="entry name" value="PEPTIDE CHAIN RELEASE FACTOR RF3"/>
    <property type="match status" value="1"/>
</dbReference>
<dbReference type="PANTHER" id="PTHR43556:SF2">
    <property type="entry name" value="PEPTIDE CHAIN RELEASE FACTOR RF3"/>
    <property type="match status" value="1"/>
</dbReference>
<dbReference type="Pfam" id="PF22042">
    <property type="entry name" value="EF-G_D2"/>
    <property type="match status" value="1"/>
</dbReference>
<dbReference type="Pfam" id="PF00009">
    <property type="entry name" value="GTP_EFTU"/>
    <property type="match status" value="1"/>
</dbReference>
<dbReference type="Pfam" id="PF16658">
    <property type="entry name" value="RF3_C"/>
    <property type="match status" value="1"/>
</dbReference>
<dbReference type="PRINTS" id="PR00315">
    <property type="entry name" value="ELONGATNFCT"/>
</dbReference>
<dbReference type="SUPFAM" id="SSF54980">
    <property type="entry name" value="EF-G C-terminal domain-like"/>
    <property type="match status" value="1"/>
</dbReference>
<dbReference type="SUPFAM" id="SSF52540">
    <property type="entry name" value="P-loop containing nucleoside triphosphate hydrolases"/>
    <property type="match status" value="1"/>
</dbReference>
<dbReference type="SUPFAM" id="SSF50447">
    <property type="entry name" value="Translation proteins"/>
    <property type="match status" value="1"/>
</dbReference>
<dbReference type="PROSITE" id="PS00301">
    <property type="entry name" value="G_TR_1"/>
    <property type="match status" value="1"/>
</dbReference>
<dbReference type="PROSITE" id="PS51722">
    <property type="entry name" value="G_TR_2"/>
    <property type="match status" value="1"/>
</dbReference>
<accession>B7UR02</accession>
<gene>
    <name evidence="1" type="primary">prfC</name>
    <name type="ordered locus">E2348C_4672</name>
</gene>
<sequence>MTLSPYLQEVAKRRTFAIISHPDAGKTTITEKVLLFGQAIQTAGTVKGRGSNQHAKSDWMEMEKQRGISITTSVMQFPYHDCLVNLLDTPGHEDFSEDTYRTLTAVDCCLMVIDAAKGVEDRTRKLMEVTRLRDTPILTFMNKLDRDIRDPMELLDEVENELKIGCAPITWPIGCGKLFKGVYHLYKDETYLYQSGKGHTIQEVRIVKGLNNPDLDAAVGEDLAQQLRDELELVKGASNEFDKELFLAGEITPVFFGTALGNFGVDHMLDGLVEWAPAPMPRQTDTRTVEASEDKFTGFVFKIQANMDPKHRDRVAFMRVVSGKYEKGMKLRQVRTAKDVVISDALTFMAGDRSHVEEAYPGDILGLHNHGTIQIGDTFTQGEMMKFTGIPNFAPELFRRIRLKDPLKQKQLLKGLVQLSEEGAVQVFRPISNNDLIVGAVGVLQFDVVVARLKSEYNVEAVYESVNVATARWVECADAKKFEEFKRKNESQLALDGGDNLAYIATSMVNLRLAQERYPDVQFHQTREH</sequence>
<comment type="function">
    <text evidence="1">Increases the formation of ribosomal termination complexes and stimulates activities of RF-1 and RF-2. It binds guanine nucleotides and has strong preference for UGA stop codons. It may interact directly with the ribosome. The stimulation of RF-1 and RF-2 is significantly reduced by GTP and GDP, but not by GMP.</text>
</comment>
<comment type="subcellular location">
    <subcellularLocation>
        <location evidence="1">Cytoplasm</location>
    </subcellularLocation>
</comment>
<comment type="similarity">
    <text evidence="1">Belongs to the TRAFAC class translation factor GTPase superfamily. Classic translation factor GTPase family. PrfC subfamily.</text>
</comment>
<protein>
    <recommendedName>
        <fullName evidence="1">Peptide chain release factor 3</fullName>
        <shortName evidence="1">RF-3</shortName>
    </recommendedName>
</protein>
<keyword id="KW-0963">Cytoplasm</keyword>
<keyword id="KW-0342">GTP-binding</keyword>
<keyword id="KW-0547">Nucleotide-binding</keyword>
<keyword id="KW-0648">Protein biosynthesis</keyword>
<keyword id="KW-1185">Reference proteome</keyword>